<evidence type="ECO:0000255" key="1">
    <source>
        <dbReference type="HAMAP-Rule" id="MF_01859"/>
    </source>
</evidence>
<comment type="function">
    <text evidence="1">Specifically methylates the guanine in position 1835 (m2G1835) of 23S rRNA.</text>
</comment>
<comment type="catalytic activity">
    <reaction evidence="1">
        <text>guanosine(1835) in 23S rRNA + S-adenosyl-L-methionine = N(2)-methylguanosine(1835) in 23S rRNA + S-adenosyl-L-homocysteine + H(+)</text>
        <dbReference type="Rhea" id="RHEA:42744"/>
        <dbReference type="Rhea" id="RHEA-COMP:10217"/>
        <dbReference type="Rhea" id="RHEA-COMP:10218"/>
        <dbReference type="ChEBI" id="CHEBI:15378"/>
        <dbReference type="ChEBI" id="CHEBI:57856"/>
        <dbReference type="ChEBI" id="CHEBI:59789"/>
        <dbReference type="ChEBI" id="CHEBI:74269"/>
        <dbReference type="ChEBI" id="CHEBI:74481"/>
        <dbReference type="EC" id="2.1.1.174"/>
    </reaction>
</comment>
<comment type="subcellular location">
    <subcellularLocation>
        <location evidence="1">Cytoplasm</location>
    </subcellularLocation>
</comment>
<comment type="similarity">
    <text evidence="1">Belongs to the methyltransferase superfamily. RlmG family.</text>
</comment>
<proteinExistence type="inferred from homology"/>
<sequence length="378" mass="42267">MSHLDNGFRSLTLQRFPATDDVNPLQAWEAADEYLLQQLDDTEILGPVLILNDAFGALSCALAEHKPYSIGDSYISELATRENLRLNGIDESSVKFLDSTADYPQQPGVVLIKVPKTLALLEQQLRALRKVVTSDTRIIAGAKARDIHTSTLELFEKVLGPTTTTLAWKKARLINCTFNEPPLADAPQTVSWKLEGTDWTIHNHANVFSRTGLDIGARFFMQHLPENLEGEIVDLGCGNGVIGLTLLDKNPQAKVVFVDESPMAVASSRLNVETNMPEALDRSEFMINNALSGVEPFRFNAVLCNPPFHQQHALTDNVAWEMFHYARRCLKINGELYIVANRHLDYFHKLKKIFGNCTTIATNNKFVVLKAVKLGRRR</sequence>
<feature type="chain" id="PRO_0000366524" description="Ribosomal RNA large subunit methyltransferase G">
    <location>
        <begin position="1"/>
        <end position="378"/>
    </location>
</feature>
<reference key="1">
    <citation type="journal article" date="2002" name="Nucleic Acids Res.">
        <title>Genome sequence of Shigella flexneri 2a: insights into pathogenicity through comparison with genomes of Escherichia coli K12 and O157.</title>
        <authorList>
            <person name="Jin Q."/>
            <person name="Yuan Z."/>
            <person name="Xu J."/>
            <person name="Wang Y."/>
            <person name="Shen Y."/>
            <person name="Lu W."/>
            <person name="Wang J."/>
            <person name="Liu H."/>
            <person name="Yang J."/>
            <person name="Yang F."/>
            <person name="Zhang X."/>
            <person name="Zhang J."/>
            <person name="Yang G."/>
            <person name="Wu H."/>
            <person name="Qu D."/>
            <person name="Dong J."/>
            <person name="Sun L."/>
            <person name="Xue Y."/>
            <person name="Zhao A."/>
            <person name="Gao Y."/>
            <person name="Zhu J."/>
            <person name="Kan B."/>
            <person name="Ding K."/>
            <person name="Chen S."/>
            <person name="Cheng H."/>
            <person name="Yao Z."/>
            <person name="He B."/>
            <person name="Chen R."/>
            <person name="Ma D."/>
            <person name="Qiang B."/>
            <person name="Wen Y."/>
            <person name="Hou Y."/>
            <person name="Yu J."/>
        </authorList>
    </citation>
    <scope>NUCLEOTIDE SEQUENCE [LARGE SCALE GENOMIC DNA]</scope>
    <source>
        <strain>301 / Serotype 2a</strain>
    </source>
</reference>
<reference key="2">
    <citation type="journal article" date="2003" name="Infect. Immun.">
        <title>Complete genome sequence and comparative genomics of Shigella flexneri serotype 2a strain 2457T.</title>
        <authorList>
            <person name="Wei J."/>
            <person name="Goldberg M.B."/>
            <person name="Burland V."/>
            <person name="Venkatesan M.M."/>
            <person name="Deng W."/>
            <person name="Fournier G."/>
            <person name="Mayhew G.F."/>
            <person name="Plunkett G. III"/>
            <person name="Rose D.J."/>
            <person name="Darling A."/>
            <person name="Mau B."/>
            <person name="Perna N.T."/>
            <person name="Payne S.M."/>
            <person name="Runyen-Janecky L.J."/>
            <person name="Zhou S."/>
            <person name="Schwartz D.C."/>
            <person name="Blattner F.R."/>
        </authorList>
    </citation>
    <scope>NUCLEOTIDE SEQUENCE [LARGE SCALE GENOMIC DNA]</scope>
    <source>
        <strain>ATCC 700930 / 2457T / Serotype 2a</strain>
    </source>
</reference>
<dbReference type="EC" id="2.1.1.174" evidence="1"/>
<dbReference type="EMBL" id="AE005674">
    <property type="protein sequence ID" value="AAN44596.1"/>
    <property type="molecule type" value="Genomic_DNA"/>
</dbReference>
<dbReference type="EMBL" id="AE014073">
    <property type="protein sequence ID" value="AAP18409.1"/>
    <property type="molecule type" value="Genomic_DNA"/>
</dbReference>
<dbReference type="RefSeq" id="WP_000018656.1">
    <property type="nucleotide sequence ID" value="NZ_WPGW01000031.1"/>
</dbReference>
<dbReference type="SMR" id="Q821A5"/>
<dbReference type="STRING" id="198214.SF3124"/>
<dbReference type="PaxDb" id="198214-SF3124"/>
<dbReference type="KEGG" id="sfl:SF3124"/>
<dbReference type="KEGG" id="sfx:S3331"/>
<dbReference type="PATRIC" id="fig|198214.7.peg.3711"/>
<dbReference type="HOGENOM" id="CLU_040288_4_0_6"/>
<dbReference type="Proteomes" id="UP000001006">
    <property type="component" value="Chromosome"/>
</dbReference>
<dbReference type="Proteomes" id="UP000002673">
    <property type="component" value="Chromosome"/>
</dbReference>
<dbReference type="GO" id="GO:0005737">
    <property type="term" value="C:cytoplasm"/>
    <property type="evidence" value="ECO:0007669"/>
    <property type="project" value="UniProtKB-SubCell"/>
</dbReference>
<dbReference type="GO" id="GO:0052916">
    <property type="term" value="F:23S rRNA (guanine(1835)-N(2))-methyltransferase activity"/>
    <property type="evidence" value="ECO:0007669"/>
    <property type="project" value="UniProtKB-EC"/>
</dbReference>
<dbReference type="GO" id="GO:0003676">
    <property type="term" value="F:nucleic acid binding"/>
    <property type="evidence" value="ECO:0007669"/>
    <property type="project" value="InterPro"/>
</dbReference>
<dbReference type="CDD" id="cd02440">
    <property type="entry name" value="AdoMet_MTases"/>
    <property type="match status" value="1"/>
</dbReference>
<dbReference type="FunFam" id="3.40.50.150:FF:000046">
    <property type="entry name" value="Ribosomal RNA large subunit methyltransferase G"/>
    <property type="match status" value="1"/>
</dbReference>
<dbReference type="FunFam" id="3.40.50.150:FF:000047">
    <property type="entry name" value="Ribosomal RNA large subunit methyltransferase G"/>
    <property type="match status" value="1"/>
</dbReference>
<dbReference type="Gene3D" id="3.40.50.150">
    <property type="entry name" value="Vaccinia Virus protein VP39"/>
    <property type="match status" value="2"/>
</dbReference>
<dbReference type="HAMAP" id="MF_01859">
    <property type="entry name" value="23SrRNA_methyltr_G"/>
    <property type="match status" value="1"/>
</dbReference>
<dbReference type="InterPro" id="IPR002052">
    <property type="entry name" value="DNA_methylase_N6_adenine_CS"/>
</dbReference>
<dbReference type="InterPro" id="IPR017237">
    <property type="entry name" value="rRNA_m2G-MeTrfase_RlmG"/>
</dbReference>
<dbReference type="InterPro" id="IPR046977">
    <property type="entry name" value="RsmC/RlmG"/>
</dbReference>
<dbReference type="InterPro" id="IPR029063">
    <property type="entry name" value="SAM-dependent_MTases_sf"/>
</dbReference>
<dbReference type="InterPro" id="IPR007848">
    <property type="entry name" value="Small_mtfrase_dom"/>
</dbReference>
<dbReference type="NCBIfam" id="NF011577">
    <property type="entry name" value="PRK15001.1"/>
    <property type="match status" value="1"/>
</dbReference>
<dbReference type="PANTHER" id="PTHR47816:SF5">
    <property type="entry name" value="RIBOSOMAL RNA LARGE SUBUNIT METHYLTRANSFERASE G"/>
    <property type="match status" value="1"/>
</dbReference>
<dbReference type="PANTHER" id="PTHR47816">
    <property type="entry name" value="RIBOSOMAL RNA SMALL SUBUNIT METHYLTRANSFERASE C"/>
    <property type="match status" value="1"/>
</dbReference>
<dbReference type="Pfam" id="PF05175">
    <property type="entry name" value="MTS"/>
    <property type="match status" value="1"/>
</dbReference>
<dbReference type="PIRSF" id="PIRSF037565">
    <property type="entry name" value="RRNA_m2G_Mtase_RsmD_prd"/>
    <property type="match status" value="1"/>
</dbReference>
<dbReference type="SUPFAM" id="SSF53335">
    <property type="entry name" value="S-adenosyl-L-methionine-dependent methyltransferases"/>
    <property type="match status" value="1"/>
</dbReference>
<accession>Q821A5</accession>
<accession>Q7BZU6</accession>
<name>RLMG_SHIFL</name>
<keyword id="KW-0963">Cytoplasm</keyword>
<keyword id="KW-0489">Methyltransferase</keyword>
<keyword id="KW-1185">Reference proteome</keyword>
<keyword id="KW-0698">rRNA processing</keyword>
<keyword id="KW-0949">S-adenosyl-L-methionine</keyword>
<keyword id="KW-0808">Transferase</keyword>
<gene>
    <name evidence="1" type="primary">rlmG</name>
    <name type="ordered locus">SF3124</name>
    <name type="ordered locus">S3331</name>
</gene>
<protein>
    <recommendedName>
        <fullName evidence="1">Ribosomal RNA large subunit methyltransferase G</fullName>
        <ecNumber evidence="1">2.1.1.174</ecNumber>
    </recommendedName>
    <alternativeName>
        <fullName evidence="1">23S rRNA m2G1835 methyltransferase</fullName>
    </alternativeName>
    <alternativeName>
        <fullName evidence="1">rRNA (guanine-N(2)-)-methyltransferase RlmG</fullName>
    </alternativeName>
</protein>
<organism>
    <name type="scientific">Shigella flexneri</name>
    <dbReference type="NCBI Taxonomy" id="623"/>
    <lineage>
        <taxon>Bacteria</taxon>
        <taxon>Pseudomonadati</taxon>
        <taxon>Pseudomonadota</taxon>
        <taxon>Gammaproteobacteria</taxon>
        <taxon>Enterobacterales</taxon>
        <taxon>Enterobacteriaceae</taxon>
        <taxon>Shigella</taxon>
    </lineage>
</organism>